<comment type="function">
    <text evidence="1">Involved in both the arginine and lysine biosynthetic pathways. Phosphorylates the LysW-bound precursors glutamate (for arginine biosynthesis), respectively alpha-aminoadipate (for lysine biosynthesis).</text>
</comment>
<comment type="catalytic activity">
    <reaction evidence="1">
        <text>[amino-group carrier protein]-C-terminal-N-(1,4-dicarboxybutan-1-yl)-L-glutamine + ATP = [amino-group carrier protein]-C-terminal-N-(1-carboxy-5-phosphooxy-5-oxopentan-1-yl)-L-glutamine + ADP</text>
        <dbReference type="Rhea" id="RHEA:41944"/>
        <dbReference type="Rhea" id="RHEA-COMP:9694"/>
        <dbReference type="Rhea" id="RHEA-COMP:9712"/>
        <dbReference type="ChEBI" id="CHEBI:30616"/>
        <dbReference type="ChEBI" id="CHEBI:78499"/>
        <dbReference type="ChEBI" id="CHEBI:78503"/>
        <dbReference type="ChEBI" id="CHEBI:456216"/>
        <dbReference type="EC" id="2.7.2.17"/>
    </reaction>
</comment>
<comment type="catalytic activity">
    <reaction evidence="1">
        <text>[amino-group carrier protein]-C-terminal-gamma-(L-glutamyl)-L-glutamate + ATP = [amino-group carrier protein]-C-terminal-gamma-(5-phospho-L-glutamyl)-L-glutamate + ADP</text>
        <dbReference type="Rhea" id="RHEA:52632"/>
        <dbReference type="Rhea" id="RHEA-COMP:13311"/>
        <dbReference type="Rhea" id="RHEA-COMP:13313"/>
        <dbReference type="ChEBI" id="CHEBI:30616"/>
        <dbReference type="ChEBI" id="CHEBI:136714"/>
        <dbReference type="ChEBI" id="CHEBI:136717"/>
        <dbReference type="ChEBI" id="CHEBI:456216"/>
        <dbReference type="EC" id="2.7.2.19"/>
    </reaction>
</comment>
<comment type="pathway">
    <text evidence="1">Amino-acid biosynthesis; L-lysine biosynthesis via AAA pathway; L-lysine from L-alpha-aminoadipate (Thermus route): step 2/5.</text>
</comment>
<comment type="pathway">
    <text evidence="1">Amino-acid biosynthesis; L-arginine biosynthesis.</text>
</comment>
<comment type="subcellular location">
    <subcellularLocation>
        <location evidence="1">Cytoplasm</location>
    </subcellularLocation>
</comment>
<comment type="similarity">
    <text evidence="1">Belongs to the acetylglutamate kinase family. LysZ subfamily.</text>
</comment>
<proteinExistence type="inferred from homology"/>
<evidence type="ECO:0000255" key="1">
    <source>
        <dbReference type="HAMAP-Rule" id="MF_02082"/>
    </source>
</evidence>
<protein>
    <recommendedName>
        <fullName evidence="1">Putative [LysW]-aminoadipate/[LysW]-glutamate kinase</fullName>
        <ecNumber evidence="1">2.7.2.17</ecNumber>
        <ecNumber evidence="1">2.7.2.19</ecNumber>
    </recommendedName>
</protein>
<sequence length="264" mass="28079">MIVVKAGGRTLLNNMDEIVKSISRLEKAVFVHGGGDLVDEWERKMGMEPQFKVSASGIKFRYTDEKELEVFVAVLGGLLNKKIVASFASYGRGAVGLTGADGPSVIAERKKKVIVQEKVGERLVKRAIAGGYTGKIKEVKTDLIKALVERGLVPVVAPIALSPEGELLNVNGDQMAAELAKALSAEYLVLLTDVPGVLMDGKVVPEIKSSEAEEVAKKVGPGMNIKIIMAGRVASGGTKVVICDGTVPDPLKCLEERSGTWVVP</sequence>
<name>LYSZ_IGNH4</name>
<dbReference type="EC" id="2.7.2.17" evidence="1"/>
<dbReference type="EC" id="2.7.2.19" evidence="1"/>
<dbReference type="EMBL" id="CP000816">
    <property type="protein sequence ID" value="ABU81803.1"/>
    <property type="molecule type" value="Genomic_DNA"/>
</dbReference>
<dbReference type="RefSeq" id="WP_011998655.1">
    <property type="nucleotide sequence ID" value="NC_009776.1"/>
</dbReference>
<dbReference type="SMR" id="A8AA51"/>
<dbReference type="STRING" id="453591.Igni_0621"/>
<dbReference type="GeneID" id="5563045"/>
<dbReference type="KEGG" id="iho:Igni_0621"/>
<dbReference type="eggNOG" id="arCOG00862">
    <property type="taxonomic scope" value="Archaea"/>
</dbReference>
<dbReference type="HOGENOM" id="CLU_053680_2_0_2"/>
<dbReference type="OrthoDB" id="6816at2157"/>
<dbReference type="PhylomeDB" id="A8AA51"/>
<dbReference type="UniPathway" id="UPA00033">
    <property type="reaction ID" value="UER00036"/>
</dbReference>
<dbReference type="UniPathway" id="UPA00068"/>
<dbReference type="Proteomes" id="UP000000262">
    <property type="component" value="Chromosome"/>
</dbReference>
<dbReference type="GO" id="GO:0005737">
    <property type="term" value="C:cytoplasm"/>
    <property type="evidence" value="ECO:0007669"/>
    <property type="project" value="UniProtKB-SubCell"/>
</dbReference>
<dbReference type="GO" id="GO:0003991">
    <property type="term" value="F:acetylglutamate kinase activity"/>
    <property type="evidence" value="ECO:0007669"/>
    <property type="project" value="TreeGrafter"/>
</dbReference>
<dbReference type="GO" id="GO:0005524">
    <property type="term" value="F:ATP binding"/>
    <property type="evidence" value="ECO:0007669"/>
    <property type="project" value="UniProtKB-KW"/>
</dbReference>
<dbReference type="GO" id="GO:0043744">
    <property type="term" value="F:N2-acetyl-L-aminoadipate kinase activity"/>
    <property type="evidence" value="ECO:0007669"/>
    <property type="project" value="RHEA"/>
</dbReference>
<dbReference type="GO" id="GO:0042450">
    <property type="term" value="P:arginine biosynthetic process via ornithine"/>
    <property type="evidence" value="ECO:0007669"/>
    <property type="project" value="UniProtKB-UniRule"/>
</dbReference>
<dbReference type="GO" id="GO:0006526">
    <property type="term" value="P:L-arginine biosynthetic process"/>
    <property type="evidence" value="ECO:0007669"/>
    <property type="project" value="UniProtKB-UniPathway"/>
</dbReference>
<dbReference type="GO" id="GO:0019878">
    <property type="term" value="P:lysine biosynthetic process via aminoadipic acid"/>
    <property type="evidence" value="ECO:0007669"/>
    <property type="project" value="UniProtKB-UniRule"/>
</dbReference>
<dbReference type="Gene3D" id="3.40.1160.10">
    <property type="entry name" value="Acetylglutamate kinase-like"/>
    <property type="match status" value="1"/>
</dbReference>
<dbReference type="HAMAP" id="MF_02082">
    <property type="entry name" value="LysZ"/>
    <property type="match status" value="1"/>
</dbReference>
<dbReference type="InterPro" id="IPR036393">
    <property type="entry name" value="AceGlu_kinase-like_sf"/>
</dbReference>
<dbReference type="InterPro" id="IPR004662">
    <property type="entry name" value="AcgluKinase_fam"/>
</dbReference>
<dbReference type="InterPro" id="IPR001048">
    <property type="entry name" value="Asp/Glu/Uridylate_kinase"/>
</dbReference>
<dbReference type="InterPro" id="IPR037529">
    <property type="entry name" value="LysZ"/>
</dbReference>
<dbReference type="NCBIfam" id="TIGR00761">
    <property type="entry name" value="argB"/>
    <property type="match status" value="1"/>
</dbReference>
<dbReference type="NCBIfam" id="NF010662">
    <property type="entry name" value="PRK14058.1-4"/>
    <property type="match status" value="1"/>
</dbReference>
<dbReference type="PANTHER" id="PTHR23342">
    <property type="entry name" value="N-ACETYLGLUTAMATE SYNTHASE"/>
    <property type="match status" value="1"/>
</dbReference>
<dbReference type="PANTHER" id="PTHR23342:SF0">
    <property type="entry name" value="N-ACETYLGLUTAMATE SYNTHASE, MITOCHONDRIAL"/>
    <property type="match status" value="1"/>
</dbReference>
<dbReference type="Pfam" id="PF00696">
    <property type="entry name" value="AA_kinase"/>
    <property type="match status" value="1"/>
</dbReference>
<dbReference type="PIRSF" id="PIRSF000728">
    <property type="entry name" value="NAGK"/>
    <property type="match status" value="1"/>
</dbReference>
<dbReference type="SUPFAM" id="SSF53633">
    <property type="entry name" value="Carbamate kinase-like"/>
    <property type="match status" value="1"/>
</dbReference>
<reference key="1">
    <citation type="journal article" date="2008" name="Genome Biol.">
        <title>A genomic analysis of the archaeal system Ignicoccus hospitalis-Nanoarchaeum equitans.</title>
        <authorList>
            <person name="Podar M."/>
            <person name="Anderson I."/>
            <person name="Makarova K.S."/>
            <person name="Elkins J.G."/>
            <person name="Ivanova N."/>
            <person name="Wall M.A."/>
            <person name="Lykidis A."/>
            <person name="Mavromatis K."/>
            <person name="Sun H."/>
            <person name="Hudson M.E."/>
            <person name="Chen W."/>
            <person name="Deciu C."/>
            <person name="Hutchison D."/>
            <person name="Eads J.R."/>
            <person name="Anderson A."/>
            <person name="Fernandes F."/>
            <person name="Szeto E."/>
            <person name="Lapidus A."/>
            <person name="Kyrpides N.C."/>
            <person name="Saier M.H. Jr."/>
            <person name="Richardson P.M."/>
            <person name="Rachel R."/>
            <person name="Huber H."/>
            <person name="Eisen J.A."/>
            <person name="Koonin E.V."/>
            <person name="Keller M."/>
            <person name="Stetter K.O."/>
        </authorList>
    </citation>
    <scope>NUCLEOTIDE SEQUENCE [LARGE SCALE GENOMIC DNA]</scope>
    <source>
        <strain>KIN4/I / DSM 18386 / JCM 14125</strain>
    </source>
</reference>
<gene>
    <name evidence="1" type="primary">lysZ</name>
    <name type="ordered locus">Igni_0621</name>
</gene>
<accession>A8AA51</accession>
<keyword id="KW-0028">Amino-acid biosynthesis</keyword>
<keyword id="KW-0055">Arginine biosynthesis</keyword>
<keyword id="KW-0067">ATP-binding</keyword>
<keyword id="KW-0963">Cytoplasm</keyword>
<keyword id="KW-0418">Kinase</keyword>
<keyword id="KW-0457">Lysine biosynthesis</keyword>
<keyword id="KW-0547">Nucleotide-binding</keyword>
<keyword id="KW-1185">Reference proteome</keyword>
<keyword id="KW-0808">Transferase</keyword>
<feature type="chain" id="PRO_1000010501" description="Putative [LysW]-aminoadipate/[LysW]-glutamate kinase">
    <location>
        <begin position="1"/>
        <end position="264"/>
    </location>
</feature>
<feature type="binding site" evidence="1">
    <location>
        <begin position="34"/>
        <end position="35"/>
    </location>
    <ligand>
        <name>substrate</name>
    </ligand>
</feature>
<feature type="binding site" evidence="1">
    <location>
        <position position="61"/>
    </location>
    <ligand>
        <name>substrate</name>
    </ligand>
</feature>
<feature type="binding site" evidence="1">
    <location>
        <position position="169"/>
    </location>
    <ligand>
        <name>substrate</name>
    </ligand>
</feature>
<feature type="site" description="Transition state stabilizer" evidence="1">
    <location>
        <position position="5"/>
    </location>
</feature>
<feature type="site" description="Transition state stabilizer" evidence="1">
    <location>
        <position position="226"/>
    </location>
</feature>
<organism>
    <name type="scientific">Ignicoccus hospitalis (strain KIN4/I / DSM 18386 / JCM 14125)</name>
    <dbReference type="NCBI Taxonomy" id="453591"/>
    <lineage>
        <taxon>Archaea</taxon>
        <taxon>Thermoproteota</taxon>
        <taxon>Thermoprotei</taxon>
        <taxon>Desulfurococcales</taxon>
        <taxon>Desulfurococcaceae</taxon>
        <taxon>Ignicoccus</taxon>
    </lineage>
</organism>